<protein>
    <recommendedName>
        <fullName>Cysteine/serine-rich nuclear protein 2</fullName>
        <shortName>CSRNP-2</shortName>
    </recommendedName>
    <alternativeName>
        <fullName>Protein FAM130A1</fullName>
    </alternativeName>
    <alternativeName>
        <fullName>TGF-beta-induced apoptosis protein 12</fullName>
        <shortName>TAIP-12</shortName>
    </alternativeName>
</protein>
<proteinExistence type="evidence at protein level"/>
<accession>Q9H175</accession>
<organism>
    <name type="scientific">Homo sapiens</name>
    <name type="common">Human</name>
    <dbReference type="NCBI Taxonomy" id="9606"/>
    <lineage>
        <taxon>Eukaryota</taxon>
        <taxon>Metazoa</taxon>
        <taxon>Chordata</taxon>
        <taxon>Craniata</taxon>
        <taxon>Vertebrata</taxon>
        <taxon>Euteleostomi</taxon>
        <taxon>Mammalia</taxon>
        <taxon>Eutheria</taxon>
        <taxon>Euarchontoglires</taxon>
        <taxon>Primates</taxon>
        <taxon>Haplorrhini</taxon>
        <taxon>Catarrhini</taxon>
        <taxon>Hominidae</taxon>
        <taxon>Homo</taxon>
    </lineage>
</organism>
<name>CSRN2_HUMAN</name>
<reference key="1">
    <citation type="thesis" date="2001" institute="University of Oxford" country="United Kingdom">
        <authorList>
            <person name="Hene L."/>
        </authorList>
    </citation>
    <scope>NUCLEOTIDE SEQUENCE [MRNA]</scope>
    <source>
        <tissue>Heart</tissue>
    </source>
</reference>
<reference key="2">
    <citation type="submission" date="2001-06" db="EMBL/GenBank/DDBJ databases">
        <title>TGF-beta induced apoptosis protein.</title>
        <authorList>
            <person name="Akiyama N."/>
            <person name="Kondoh S."/>
        </authorList>
    </citation>
    <scope>NUCLEOTIDE SEQUENCE [MRNA]</scope>
</reference>
<reference key="3">
    <citation type="journal article" date="2004" name="Genome Res.">
        <title>The status, quality, and expansion of the NIH full-length cDNA project: the Mammalian Gene Collection (MGC).</title>
        <authorList>
            <consortium name="The MGC Project Team"/>
        </authorList>
    </citation>
    <scope>NUCLEOTIDE SEQUENCE [LARGE SCALE MRNA]</scope>
    <source>
        <tissue>Brain</tissue>
    </source>
</reference>
<reference key="4">
    <citation type="journal article" date="2012" name="Proc. Natl. Acad. Sci. U.S.A.">
        <title>N-terminal acetylome analyses and functional insights of the N-terminal acetyltransferase NatB.</title>
        <authorList>
            <person name="Van Damme P."/>
            <person name="Lasa M."/>
            <person name="Polevoda B."/>
            <person name="Gazquez C."/>
            <person name="Elosegui-Artola A."/>
            <person name="Kim D.S."/>
            <person name="De Juan-Pardo E."/>
            <person name="Demeyer K."/>
            <person name="Hole K."/>
            <person name="Larrea E."/>
            <person name="Timmerman E."/>
            <person name="Prieto J."/>
            <person name="Arnesen T."/>
            <person name="Sherman F."/>
            <person name="Gevaert K."/>
            <person name="Aldabe R."/>
        </authorList>
    </citation>
    <scope>ACETYLATION [LARGE SCALE ANALYSIS] AT MET-1</scope>
    <scope>IDENTIFICATION BY MASS SPECTROMETRY [LARGE SCALE ANALYSIS]</scope>
</reference>
<gene>
    <name type="primary">CSRNP2</name>
    <name type="synonym">C12orf22</name>
    <name type="synonym">FAM130A1</name>
    <name type="synonym">TAIP12</name>
</gene>
<sequence length="543" mass="59591">MDAFTGSGLKRKFDDVDVGSSVSNSDDEISSSDSADSCDSLNPPTTASFTPTSILKRQKQLRRKNVRFDQVTVYYFARRQGFTSVPSQGGSSLGMAQRHNSVRSYTLCEFAQEQEVNHREILREHLKEEKLHAKKMKLTKNGTVESVEADGLTLDDVSDEDIDVENVEVDDYFFLQPLPTKRRRALLRASGVHRIDAEEKQELRAIRLSREECGCDCRLYCDPEACACSQAGIKCQVDRMSFPCGCSRDGCGNMAGRIEFNPIRVRTHYLHTIMKLELESKRQVSRPAAPDEEPSPTASCSLTGAQGSETQDFQEFIAENETAVMHLQSAEELERLKAEEDSSGSSASLDSSIESLGVCILEEPLAVPEELCPGLTAPILIQAQLPPGSSVLCFTENSDHPTASTVNSPSYLNSGPLVYYQVEQRPVLGVKGEPGTEEGSASFPKEKDLNVFSLPVTSLVACSSTDPAALCKSEVGKTPTLEALLPEDCNPEEPENEDFHPSWSPSSLPFRTDNEEGCGMVKTSQQNEDRPPEDSSLELPLAV</sequence>
<keyword id="KW-0007">Acetylation</keyword>
<keyword id="KW-0010">Activator</keyword>
<keyword id="KW-0053">Apoptosis</keyword>
<keyword id="KW-0238">DNA-binding</keyword>
<keyword id="KW-0539">Nucleus</keyword>
<keyword id="KW-1267">Proteomics identification</keyword>
<keyword id="KW-1185">Reference proteome</keyword>
<keyword id="KW-0804">Transcription</keyword>
<keyword id="KW-0805">Transcription regulation</keyword>
<comment type="function">
    <text evidence="1">Binds to the consensus sequence 5'-AGAGTG-3' and has transcriptional activator activity (By similarity). May play a role in apoptosis.</text>
</comment>
<comment type="interaction">
    <interactant intactId="EBI-5235958">
        <id>Q9H175</id>
    </interactant>
    <interactant intactId="EBI-357253">
        <id>P62136</id>
        <label>PPP1CA</label>
    </interactant>
    <organismsDiffer>false</organismsDiffer>
    <experiments>11</experiments>
</comment>
<comment type="interaction">
    <interactant intactId="EBI-5235958">
        <id>Q9H175</id>
    </interactant>
    <interactant intactId="EBI-352350">
        <id>P62140</id>
        <label>PPP1CB</label>
    </interactant>
    <organismsDiffer>false</organismsDiffer>
    <experiments>7</experiments>
</comment>
<comment type="interaction">
    <interactant intactId="EBI-5235958">
        <id>Q9H175</id>
    </interactant>
    <interactant intactId="EBI-356283">
        <id>P36873</id>
        <label>PPP1CC</label>
    </interactant>
    <organismsDiffer>false</organismsDiffer>
    <experiments>9</experiments>
</comment>
<comment type="subcellular location">
    <subcellularLocation>
        <location evidence="1">Nucleus</location>
    </subcellularLocation>
</comment>
<comment type="similarity">
    <text evidence="3">Belongs to the AXUD1 family.</text>
</comment>
<dbReference type="EMBL" id="AJ298133">
    <property type="protein sequence ID" value="CAC22252.1"/>
    <property type="molecule type" value="mRNA"/>
</dbReference>
<dbReference type="EMBL" id="AB063302">
    <property type="protein sequence ID" value="BAB79451.2"/>
    <property type="molecule type" value="mRNA"/>
</dbReference>
<dbReference type="EMBL" id="BC017221">
    <property type="protein sequence ID" value="AAH17221.1"/>
    <property type="molecule type" value="mRNA"/>
</dbReference>
<dbReference type="CCDS" id="CCDS8807.1"/>
<dbReference type="RefSeq" id="NP_110436.1">
    <property type="nucleotide sequence ID" value="NM_030809.3"/>
</dbReference>
<dbReference type="RefSeq" id="XP_006719684.1">
    <property type="nucleotide sequence ID" value="XM_006719621.2"/>
</dbReference>
<dbReference type="RefSeq" id="XP_024304978.1">
    <property type="nucleotide sequence ID" value="XM_024449210.2"/>
</dbReference>
<dbReference type="RefSeq" id="XP_024304979.1">
    <property type="nucleotide sequence ID" value="XM_024449211.2"/>
</dbReference>
<dbReference type="RefSeq" id="XP_024304980.1">
    <property type="nucleotide sequence ID" value="XM_024449212.2"/>
</dbReference>
<dbReference type="RefSeq" id="XP_024304981.1">
    <property type="nucleotide sequence ID" value="XM_024449213.2"/>
</dbReference>
<dbReference type="RefSeq" id="XP_024304982.1">
    <property type="nucleotide sequence ID" value="XM_024449214.2"/>
</dbReference>
<dbReference type="RefSeq" id="XP_024304983.1">
    <property type="nucleotide sequence ID" value="XM_024449215.2"/>
</dbReference>
<dbReference type="RefSeq" id="XP_024304984.1">
    <property type="nucleotide sequence ID" value="XM_024449216.2"/>
</dbReference>
<dbReference type="RefSeq" id="XP_047285573.1">
    <property type="nucleotide sequence ID" value="XM_047429617.1"/>
</dbReference>
<dbReference type="RefSeq" id="XP_047285574.1">
    <property type="nucleotide sequence ID" value="XM_047429618.1"/>
</dbReference>
<dbReference type="RefSeq" id="XP_047285575.1">
    <property type="nucleotide sequence ID" value="XM_047429619.1"/>
</dbReference>
<dbReference type="RefSeq" id="XP_047285576.1">
    <property type="nucleotide sequence ID" value="XM_047429620.1"/>
</dbReference>
<dbReference type="RefSeq" id="XP_047285577.1">
    <property type="nucleotide sequence ID" value="XM_047429621.1"/>
</dbReference>
<dbReference type="BioGRID" id="123528">
    <property type="interactions" value="5"/>
</dbReference>
<dbReference type="ELM" id="Q9H175"/>
<dbReference type="FunCoup" id="Q9H175">
    <property type="interactions" value="1620"/>
</dbReference>
<dbReference type="IntAct" id="Q9H175">
    <property type="interactions" value="3"/>
</dbReference>
<dbReference type="MINT" id="Q9H175"/>
<dbReference type="STRING" id="9606.ENSP00000228515"/>
<dbReference type="GlyCosmos" id="Q9H175">
    <property type="glycosylation" value="1 site, 2 glycans"/>
</dbReference>
<dbReference type="GlyGen" id="Q9H175">
    <property type="glycosylation" value="2 sites, 2 O-linked glycans (1 site)"/>
</dbReference>
<dbReference type="iPTMnet" id="Q9H175"/>
<dbReference type="PhosphoSitePlus" id="Q9H175"/>
<dbReference type="BioMuta" id="CSRNP2"/>
<dbReference type="DMDM" id="71153583"/>
<dbReference type="jPOST" id="Q9H175"/>
<dbReference type="MassIVE" id="Q9H175"/>
<dbReference type="PaxDb" id="9606-ENSP00000228515"/>
<dbReference type="PeptideAtlas" id="Q9H175"/>
<dbReference type="ProteomicsDB" id="80377"/>
<dbReference type="Antibodypedia" id="14333">
    <property type="antibodies" value="264 antibodies from 28 providers"/>
</dbReference>
<dbReference type="DNASU" id="81566"/>
<dbReference type="Ensembl" id="ENST00000228515.6">
    <property type="protein sequence ID" value="ENSP00000228515.1"/>
    <property type="gene ID" value="ENSG00000110925.7"/>
</dbReference>
<dbReference type="GeneID" id="81566"/>
<dbReference type="KEGG" id="hsa:81566"/>
<dbReference type="MANE-Select" id="ENST00000228515.6">
    <property type="protein sequence ID" value="ENSP00000228515.1"/>
    <property type="RefSeq nucleotide sequence ID" value="NM_030809.3"/>
    <property type="RefSeq protein sequence ID" value="NP_110436.1"/>
</dbReference>
<dbReference type="UCSC" id="uc001rxu.3">
    <property type="organism name" value="human"/>
</dbReference>
<dbReference type="AGR" id="HGNC:16006"/>
<dbReference type="CTD" id="81566"/>
<dbReference type="GeneCards" id="CSRNP2"/>
<dbReference type="HGNC" id="HGNC:16006">
    <property type="gene designation" value="CSRNP2"/>
</dbReference>
<dbReference type="HPA" id="ENSG00000110925">
    <property type="expression patterns" value="Low tissue specificity"/>
</dbReference>
<dbReference type="MIM" id="620404">
    <property type="type" value="gene"/>
</dbReference>
<dbReference type="neXtProt" id="NX_Q9H175"/>
<dbReference type="OpenTargets" id="ENSG00000110925"/>
<dbReference type="PharmGKB" id="PA25503"/>
<dbReference type="VEuPathDB" id="HostDB:ENSG00000110925"/>
<dbReference type="eggNOG" id="KOG3813">
    <property type="taxonomic scope" value="Eukaryota"/>
</dbReference>
<dbReference type="GeneTree" id="ENSGT00950000183072"/>
<dbReference type="HOGENOM" id="CLU_034103_0_1_1"/>
<dbReference type="InParanoid" id="Q9H175"/>
<dbReference type="OMA" id="PFRTDHE"/>
<dbReference type="OrthoDB" id="5946974at2759"/>
<dbReference type="PAN-GO" id="Q9H175">
    <property type="GO annotations" value="4 GO annotations based on evolutionary models"/>
</dbReference>
<dbReference type="PhylomeDB" id="Q9H175"/>
<dbReference type="TreeFam" id="TF323969"/>
<dbReference type="PathwayCommons" id="Q9H175"/>
<dbReference type="SignaLink" id="Q9H175"/>
<dbReference type="BioGRID-ORCS" id="81566">
    <property type="hits" value="10 hits in 1162 CRISPR screens"/>
</dbReference>
<dbReference type="ChiTaRS" id="CSRNP2">
    <property type="organism name" value="human"/>
</dbReference>
<dbReference type="GenomeRNAi" id="81566"/>
<dbReference type="Pharos" id="Q9H175">
    <property type="development level" value="Tdark"/>
</dbReference>
<dbReference type="PRO" id="PR:Q9H175"/>
<dbReference type="Proteomes" id="UP000005640">
    <property type="component" value="Chromosome 12"/>
</dbReference>
<dbReference type="RNAct" id="Q9H175">
    <property type="molecule type" value="protein"/>
</dbReference>
<dbReference type="Bgee" id="ENSG00000110925">
    <property type="expression patterns" value="Expressed in cortical plate and 184 other cell types or tissues"/>
</dbReference>
<dbReference type="ExpressionAtlas" id="Q9H175">
    <property type="expression patterns" value="baseline and differential"/>
</dbReference>
<dbReference type="GO" id="GO:0000785">
    <property type="term" value="C:chromatin"/>
    <property type="evidence" value="ECO:0000247"/>
    <property type="project" value="NTNU_SB"/>
</dbReference>
<dbReference type="GO" id="GO:0005634">
    <property type="term" value="C:nucleus"/>
    <property type="evidence" value="ECO:0000314"/>
    <property type="project" value="UniProtKB"/>
</dbReference>
<dbReference type="GO" id="GO:0001228">
    <property type="term" value="F:DNA-binding transcription activator activity, RNA polymerase II-specific"/>
    <property type="evidence" value="ECO:0007669"/>
    <property type="project" value="Ensembl"/>
</dbReference>
<dbReference type="GO" id="GO:0003700">
    <property type="term" value="F:DNA-binding transcription factor activity"/>
    <property type="evidence" value="ECO:0000250"/>
    <property type="project" value="UniProtKB"/>
</dbReference>
<dbReference type="GO" id="GO:0000981">
    <property type="term" value="F:DNA-binding transcription factor activity, RNA polymerase II-specific"/>
    <property type="evidence" value="ECO:0000247"/>
    <property type="project" value="NTNU_SB"/>
</dbReference>
<dbReference type="GO" id="GO:0019902">
    <property type="term" value="F:phosphatase binding"/>
    <property type="evidence" value="ECO:0000314"/>
    <property type="project" value="UniProtKB"/>
</dbReference>
<dbReference type="GO" id="GO:0043565">
    <property type="term" value="F:sequence-specific DNA binding"/>
    <property type="evidence" value="ECO:0000318"/>
    <property type="project" value="GO_Central"/>
</dbReference>
<dbReference type="GO" id="GO:0006915">
    <property type="term" value="P:apoptotic process"/>
    <property type="evidence" value="ECO:0007669"/>
    <property type="project" value="UniProtKB-KW"/>
</dbReference>
<dbReference type="GO" id="GO:0045944">
    <property type="term" value="P:positive regulation of transcription by RNA polymerase II"/>
    <property type="evidence" value="ECO:0000250"/>
    <property type="project" value="UniProtKB"/>
</dbReference>
<dbReference type="GO" id="GO:0006357">
    <property type="term" value="P:regulation of transcription by RNA polymerase II"/>
    <property type="evidence" value="ECO:0000318"/>
    <property type="project" value="GO_Central"/>
</dbReference>
<dbReference type="InterPro" id="IPR031972">
    <property type="entry name" value="CSRNP_N"/>
</dbReference>
<dbReference type="InterPro" id="IPR023260">
    <property type="entry name" value="Cys/Ser-rich_nuc_prot"/>
</dbReference>
<dbReference type="PANTHER" id="PTHR13580:SF6">
    <property type="entry name" value="CYSTEINE_SERINE-RICH NUCLEAR PROTEIN 2"/>
    <property type="match status" value="1"/>
</dbReference>
<dbReference type="PANTHER" id="PTHR13580">
    <property type="entry name" value="TGF-BETA INDUCED APOPTOSIS PROTEIN"/>
    <property type="match status" value="1"/>
</dbReference>
<dbReference type="Pfam" id="PF16019">
    <property type="entry name" value="CSRNP_N"/>
    <property type="match status" value="1"/>
</dbReference>
<dbReference type="PRINTS" id="PR02031">
    <property type="entry name" value="CYSSERRICHNP"/>
</dbReference>
<feature type="chain" id="PRO_0000114790" description="Cysteine/serine-rich nuclear protein 2">
    <location>
        <begin position="1"/>
        <end position="543"/>
    </location>
</feature>
<feature type="region of interest" description="Disordered" evidence="2">
    <location>
        <begin position="1"/>
        <end position="51"/>
    </location>
</feature>
<feature type="region of interest" description="Disordered" evidence="2">
    <location>
        <begin position="281"/>
        <end position="305"/>
    </location>
</feature>
<feature type="region of interest" description="Disordered" evidence="2">
    <location>
        <begin position="488"/>
        <end position="543"/>
    </location>
</feature>
<feature type="compositionally biased region" description="Low complexity" evidence="2">
    <location>
        <begin position="31"/>
        <end position="40"/>
    </location>
</feature>
<feature type="compositionally biased region" description="Polar residues" evidence="2">
    <location>
        <begin position="42"/>
        <end position="51"/>
    </location>
</feature>
<feature type="compositionally biased region" description="Polar residues" evidence="2">
    <location>
        <begin position="296"/>
        <end position="305"/>
    </location>
</feature>
<feature type="modified residue" description="N-acetylmethionine" evidence="4">
    <location>
        <position position="1"/>
    </location>
</feature>
<feature type="sequence variant" id="VAR_053016" description="In dbSNP:rs11542510.">
    <original>T</original>
    <variation>M</variation>
    <location>
        <position position="436"/>
    </location>
</feature>
<evidence type="ECO:0000250" key="1"/>
<evidence type="ECO:0000256" key="2">
    <source>
        <dbReference type="SAM" id="MobiDB-lite"/>
    </source>
</evidence>
<evidence type="ECO:0000305" key="3"/>
<evidence type="ECO:0007744" key="4">
    <source>
    </source>
</evidence>